<feature type="chain" id="PRO_0000407263" description="N(2)-fixation sustaining protein CowN">
    <location>
        <begin position="1"/>
        <end position="92"/>
    </location>
</feature>
<proteinExistence type="inferred from homology"/>
<dbReference type="EMBL" id="CP001312">
    <property type="protein sequence ID" value="ADE84340.1"/>
    <property type="molecule type" value="Genomic_DNA"/>
</dbReference>
<dbReference type="RefSeq" id="WP_013066319.1">
    <property type="nucleotide sequence ID" value="NC_014034.1"/>
</dbReference>
<dbReference type="STRING" id="272942.RCAP_rcc00575"/>
<dbReference type="GeneID" id="31489525"/>
<dbReference type="KEGG" id="rcp:RCAP_rcc00575"/>
<dbReference type="HOGENOM" id="CLU_149349_0_0_5"/>
<dbReference type="OrthoDB" id="7689335at2"/>
<dbReference type="Proteomes" id="UP000002361">
    <property type="component" value="Chromosome"/>
</dbReference>
<dbReference type="GO" id="GO:0009399">
    <property type="term" value="P:nitrogen fixation"/>
    <property type="evidence" value="ECO:0007669"/>
    <property type="project" value="UniProtKB-UniRule"/>
</dbReference>
<dbReference type="HAMAP" id="MF_02117">
    <property type="entry name" value="CowN"/>
    <property type="match status" value="1"/>
</dbReference>
<dbReference type="InterPro" id="IPR024899">
    <property type="entry name" value="CowN"/>
</dbReference>
<dbReference type="NCBIfam" id="NF033689">
    <property type="entry name" value="N2Fix_CO_CowN"/>
    <property type="match status" value="1"/>
</dbReference>
<dbReference type="Pfam" id="PF20543">
    <property type="entry name" value="CowN"/>
    <property type="match status" value="1"/>
</dbReference>
<gene>
    <name evidence="1" type="primary">cowN</name>
    <name type="ordered locus">RCAP_rcc00575</name>
</gene>
<protein>
    <recommendedName>
        <fullName evidence="1">N(2)-fixation sustaining protein CowN</fullName>
    </recommendedName>
    <alternativeName>
        <fullName evidence="1">CO weal-nitrogenase</fullName>
    </alternativeName>
</protein>
<accession>D5ANI6</accession>
<evidence type="ECO:0000255" key="1">
    <source>
        <dbReference type="HAMAP-Rule" id="MF_02117"/>
    </source>
</evidence>
<name>COWN_RHOCB</name>
<sequence>MNDQTPDRYVTFMGIACDTNADRLCEMLAARMAGNDSRWVAYFEKKLAENAQMGHDRLRFIGAQVNALMSFFEEEDDEAALALLWHIEHHCL</sequence>
<keyword id="KW-0535">Nitrogen fixation</keyword>
<keyword id="KW-1185">Reference proteome</keyword>
<organism>
    <name type="scientific">Rhodobacter capsulatus (strain ATCC BAA-309 / NBRC 16581 / SB1003)</name>
    <dbReference type="NCBI Taxonomy" id="272942"/>
    <lineage>
        <taxon>Bacteria</taxon>
        <taxon>Pseudomonadati</taxon>
        <taxon>Pseudomonadota</taxon>
        <taxon>Alphaproteobacteria</taxon>
        <taxon>Rhodobacterales</taxon>
        <taxon>Rhodobacter group</taxon>
        <taxon>Rhodobacter</taxon>
    </lineage>
</organism>
<comment type="function">
    <text evidence="1">Is required to sustain N(2)-dependent growth in the presence of low levels of carbon monoxide (CO). Probably acts by protecting the N(2) fixation ability of the nitrogenase complex, which is inactivated in the presence of CO.</text>
</comment>
<comment type="similarity">
    <text evidence="1">Belongs to the CowN family.</text>
</comment>
<reference key="1">
    <citation type="journal article" date="2010" name="J. Bacteriol.">
        <title>Complete genome sequence of the photosynthetic purple nonsulfur bacterium Rhodobacter capsulatus SB 1003.</title>
        <authorList>
            <person name="Strnad H."/>
            <person name="Lapidus A."/>
            <person name="Paces J."/>
            <person name="Ulbrich P."/>
            <person name="Vlcek C."/>
            <person name="Paces V."/>
            <person name="Haselkorn R."/>
        </authorList>
    </citation>
    <scope>NUCLEOTIDE SEQUENCE [LARGE SCALE GENOMIC DNA]</scope>
    <source>
        <strain>ATCC BAA-309 / NBRC 16581 / SB1003</strain>
    </source>
</reference>